<gene>
    <name type="primary">rps-7</name>
    <name type="ORF">ZC434.2</name>
</gene>
<reference key="1">
    <citation type="journal article" date="1998" name="Science">
        <title>Genome sequence of the nematode C. elegans: a platform for investigating biology.</title>
        <authorList>
            <consortium name="The C. elegans sequencing consortium"/>
        </authorList>
    </citation>
    <scope>NUCLEOTIDE SEQUENCE [LARGE SCALE GENOMIC DNA]</scope>
    <source>
        <strain>Bristol N2</strain>
    </source>
</reference>
<accession>Q23312</accession>
<name>RS7_CAEEL</name>
<comment type="similarity">
    <text evidence="1">Belongs to the eukaryotic ribosomal protein eS7 family.</text>
</comment>
<dbReference type="EMBL" id="Z75714">
    <property type="protein sequence ID" value="CAB00058.1"/>
    <property type="molecule type" value="Genomic_DNA"/>
</dbReference>
<dbReference type="PIR" id="T27565">
    <property type="entry name" value="T27565"/>
</dbReference>
<dbReference type="RefSeq" id="NP_492708.1">
    <property type="nucleotide sequence ID" value="NM_060307.4"/>
</dbReference>
<dbReference type="PDB" id="9BH5">
    <property type="method" value="EM"/>
    <property type="resolution" value="2.63 A"/>
    <property type="chains" value="AH=1-194"/>
</dbReference>
<dbReference type="PDB" id="9CAI">
    <property type="method" value="EM"/>
    <property type="resolution" value="2.59 A"/>
    <property type="chains" value="AH=1-194"/>
</dbReference>
<dbReference type="PDBsum" id="9BH5"/>
<dbReference type="PDBsum" id="9CAI"/>
<dbReference type="EMDB" id="EMD-44533"/>
<dbReference type="EMDB" id="EMD-45392"/>
<dbReference type="SMR" id="Q23312"/>
<dbReference type="BioGRID" id="38318">
    <property type="interactions" value="89"/>
</dbReference>
<dbReference type="DIP" id="DIP-26439N"/>
<dbReference type="FunCoup" id="Q23312">
    <property type="interactions" value="2540"/>
</dbReference>
<dbReference type="IntAct" id="Q23312">
    <property type="interactions" value="3"/>
</dbReference>
<dbReference type="STRING" id="6239.ZC434.2.1"/>
<dbReference type="PaxDb" id="6239-ZC434.2"/>
<dbReference type="PeptideAtlas" id="Q23312"/>
<dbReference type="EnsemblMetazoa" id="ZC434.2.1">
    <property type="protein sequence ID" value="ZC434.2.1"/>
    <property type="gene ID" value="WBGene00004476"/>
</dbReference>
<dbReference type="GeneID" id="172901"/>
<dbReference type="KEGG" id="cel:CELE_ZC434.2"/>
<dbReference type="UCSC" id="ZC434.2.1">
    <property type="organism name" value="c. elegans"/>
</dbReference>
<dbReference type="AGR" id="WB:WBGene00004476"/>
<dbReference type="CTD" id="172901"/>
<dbReference type="WormBase" id="ZC434.2">
    <property type="protein sequence ID" value="CE06577"/>
    <property type="gene ID" value="WBGene00004476"/>
    <property type="gene designation" value="rps-7"/>
</dbReference>
<dbReference type="eggNOG" id="KOG3320">
    <property type="taxonomic scope" value="Eukaryota"/>
</dbReference>
<dbReference type="GeneTree" id="ENSGT00390000014122"/>
<dbReference type="HOGENOM" id="CLU_088621_1_2_1"/>
<dbReference type="InParanoid" id="Q23312"/>
<dbReference type="OMA" id="AAYHKVQ"/>
<dbReference type="OrthoDB" id="1724687at2759"/>
<dbReference type="PhylomeDB" id="Q23312"/>
<dbReference type="Reactome" id="R-CEL-156827">
    <property type="pathway name" value="L13a-mediated translational silencing of Ceruloplasmin expression"/>
</dbReference>
<dbReference type="Reactome" id="R-CEL-1799339">
    <property type="pathway name" value="SRP-dependent cotranslational protein targeting to membrane"/>
</dbReference>
<dbReference type="Reactome" id="R-CEL-6791226">
    <property type="pathway name" value="Major pathway of rRNA processing in the nucleolus and cytosol"/>
</dbReference>
<dbReference type="Reactome" id="R-CEL-72649">
    <property type="pathway name" value="Translation initiation complex formation"/>
</dbReference>
<dbReference type="Reactome" id="R-CEL-72689">
    <property type="pathway name" value="Formation of a pool of free 40S subunits"/>
</dbReference>
<dbReference type="Reactome" id="R-CEL-72695">
    <property type="pathway name" value="Formation of the ternary complex, and subsequently, the 43S complex"/>
</dbReference>
<dbReference type="Reactome" id="R-CEL-72702">
    <property type="pathway name" value="Ribosomal scanning and start codon recognition"/>
</dbReference>
<dbReference type="Reactome" id="R-CEL-72706">
    <property type="pathway name" value="GTP hydrolysis and joining of the 60S ribosomal subunit"/>
</dbReference>
<dbReference type="Reactome" id="R-CEL-975956">
    <property type="pathway name" value="Nonsense Mediated Decay (NMD) independent of the Exon Junction Complex (EJC)"/>
</dbReference>
<dbReference type="Reactome" id="R-CEL-975957">
    <property type="pathway name" value="Nonsense Mediated Decay (NMD) enhanced by the Exon Junction Complex (EJC)"/>
</dbReference>
<dbReference type="PRO" id="PR:Q23312"/>
<dbReference type="Proteomes" id="UP000001940">
    <property type="component" value="Chromosome I"/>
</dbReference>
<dbReference type="Bgee" id="WBGene00004476">
    <property type="expression patterns" value="Expressed in adult organism and 4 other cell types or tissues"/>
</dbReference>
<dbReference type="GO" id="GO:0022627">
    <property type="term" value="C:cytosolic small ribosomal subunit"/>
    <property type="evidence" value="ECO:0000318"/>
    <property type="project" value="GO_Central"/>
</dbReference>
<dbReference type="GO" id="GO:0032040">
    <property type="term" value="C:small-subunit processome"/>
    <property type="evidence" value="ECO:0000318"/>
    <property type="project" value="GO_Central"/>
</dbReference>
<dbReference type="GO" id="GO:0003735">
    <property type="term" value="F:structural constituent of ribosome"/>
    <property type="evidence" value="ECO:0007669"/>
    <property type="project" value="InterPro"/>
</dbReference>
<dbReference type="GO" id="GO:0042274">
    <property type="term" value="P:ribosomal small subunit biogenesis"/>
    <property type="evidence" value="ECO:0000318"/>
    <property type="project" value="GO_Central"/>
</dbReference>
<dbReference type="GO" id="GO:0006364">
    <property type="term" value="P:rRNA processing"/>
    <property type="evidence" value="ECO:0000318"/>
    <property type="project" value="GO_Central"/>
</dbReference>
<dbReference type="GO" id="GO:0006412">
    <property type="term" value="P:translation"/>
    <property type="evidence" value="ECO:0007669"/>
    <property type="project" value="InterPro"/>
</dbReference>
<dbReference type="InterPro" id="IPR000554">
    <property type="entry name" value="Ribosomal_eS7"/>
</dbReference>
<dbReference type="InterPro" id="IPR047861">
    <property type="entry name" value="Ribosomal_eS7_CS"/>
</dbReference>
<dbReference type="PANTHER" id="PTHR11278">
    <property type="entry name" value="40S RIBOSOMAL PROTEIN S7"/>
    <property type="match status" value="1"/>
</dbReference>
<dbReference type="PANTHER" id="PTHR11278:SF0">
    <property type="entry name" value="SMALL RIBOSOMAL SUBUNIT PROTEIN ES7"/>
    <property type="match status" value="1"/>
</dbReference>
<dbReference type="Pfam" id="PF01251">
    <property type="entry name" value="Ribosomal_S7e"/>
    <property type="match status" value="1"/>
</dbReference>
<dbReference type="PROSITE" id="PS00948">
    <property type="entry name" value="RIBOSOMAL_S7E"/>
    <property type="match status" value="1"/>
</dbReference>
<feature type="chain" id="PRO_0000174204" description="Small ribosomal subunit protein eS7">
    <location>
        <begin position="1"/>
        <end position="194"/>
    </location>
</feature>
<protein>
    <recommendedName>
        <fullName evidence="1">Small ribosomal subunit protein eS7</fullName>
    </recommendedName>
    <alternativeName>
        <fullName>40S ribosomal protein S7</fullName>
    </alternativeName>
</protein>
<evidence type="ECO:0000305" key="1"/>
<keyword id="KW-0002">3D-structure</keyword>
<keyword id="KW-1185">Reference proteome</keyword>
<keyword id="KW-0687">Ribonucleoprotein</keyword>
<keyword id="KW-0689">Ribosomal protein</keyword>
<sequence>MPEIIGKLLKSDGKVVSEIEKQVSQALIDLETNDDVQSQLKELYIVGVKEVELGNKSAIIIYVPVPQLKAFHKIHPALVRELEKKFGGRDILILAKRRILPKPQRGSKARPQKQKRPRSRTLTAVHDAWLDELVYPAEVVGRRIRVKLDGKKVYKVHLDKSHQTNVGHKIGVFASVYRKLTGKDVTFEFPDPIF</sequence>
<proteinExistence type="evidence at protein level"/>
<organism>
    <name type="scientific">Caenorhabditis elegans</name>
    <dbReference type="NCBI Taxonomy" id="6239"/>
    <lineage>
        <taxon>Eukaryota</taxon>
        <taxon>Metazoa</taxon>
        <taxon>Ecdysozoa</taxon>
        <taxon>Nematoda</taxon>
        <taxon>Chromadorea</taxon>
        <taxon>Rhabditida</taxon>
        <taxon>Rhabditina</taxon>
        <taxon>Rhabditomorpha</taxon>
        <taxon>Rhabditoidea</taxon>
        <taxon>Rhabditidae</taxon>
        <taxon>Peloderinae</taxon>
        <taxon>Caenorhabditis</taxon>
    </lineage>
</organism>